<sequence>MAKKKQNTENYLAQNRKARFNYAIAETFEAGISLTGTEIKSVRAGQITIGDGFVTIHNGNALLTNVHISSYVQGNQFNVDPLRTRQLLLHKREIRVLEKATQEQGVTIVPLKVYLKHGFAKVLVGIGRGKKKYDKREDIKKRDQERELSRRFKN</sequence>
<name>SSRP_LEUMM</name>
<organism>
    <name type="scientific">Leuconostoc mesenteroides subsp. mesenteroides (strain ATCC 8293 / DSM 20343 / BCRC 11652 / CCM 1803 / JCM 6124 / NCDO 523 / NBRC 100496 / NCIMB 8023 / NCTC 12954 / NRRL B-1118 / 37Y)</name>
    <dbReference type="NCBI Taxonomy" id="203120"/>
    <lineage>
        <taxon>Bacteria</taxon>
        <taxon>Bacillati</taxon>
        <taxon>Bacillota</taxon>
        <taxon>Bacilli</taxon>
        <taxon>Lactobacillales</taxon>
        <taxon>Lactobacillaceae</taxon>
        <taxon>Leuconostoc</taxon>
    </lineage>
</organism>
<reference key="1">
    <citation type="journal article" date="2006" name="Proc. Natl. Acad. Sci. U.S.A.">
        <title>Comparative genomics of the lactic acid bacteria.</title>
        <authorList>
            <person name="Makarova K.S."/>
            <person name="Slesarev A."/>
            <person name="Wolf Y.I."/>
            <person name="Sorokin A."/>
            <person name="Mirkin B."/>
            <person name="Koonin E.V."/>
            <person name="Pavlov A."/>
            <person name="Pavlova N."/>
            <person name="Karamychev V."/>
            <person name="Polouchine N."/>
            <person name="Shakhova V."/>
            <person name="Grigoriev I."/>
            <person name="Lou Y."/>
            <person name="Rohksar D."/>
            <person name="Lucas S."/>
            <person name="Huang K."/>
            <person name="Goodstein D.M."/>
            <person name="Hawkins T."/>
            <person name="Plengvidhya V."/>
            <person name="Welker D."/>
            <person name="Hughes J."/>
            <person name="Goh Y."/>
            <person name="Benson A."/>
            <person name="Baldwin K."/>
            <person name="Lee J.-H."/>
            <person name="Diaz-Muniz I."/>
            <person name="Dosti B."/>
            <person name="Smeianov V."/>
            <person name="Wechter W."/>
            <person name="Barabote R."/>
            <person name="Lorca G."/>
            <person name="Altermann E."/>
            <person name="Barrangou R."/>
            <person name="Ganesan B."/>
            <person name="Xie Y."/>
            <person name="Rawsthorne H."/>
            <person name="Tamir D."/>
            <person name="Parker C."/>
            <person name="Breidt F."/>
            <person name="Broadbent J.R."/>
            <person name="Hutkins R."/>
            <person name="O'Sullivan D."/>
            <person name="Steele J."/>
            <person name="Unlu G."/>
            <person name="Saier M.H. Jr."/>
            <person name="Klaenhammer T."/>
            <person name="Richardson P."/>
            <person name="Kozyavkin S."/>
            <person name="Weimer B.C."/>
            <person name="Mills D.A."/>
        </authorList>
    </citation>
    <scope>NUCLEOTIDE SEQUENCE [LARGE SCALE GENOMIC DNA]</scope>
    <source>
        <strain>ATCC 8293 / DSM 20343 / BCRC 11652 / CCM 1803 / JCM 6124 / NCDO 523 / NBRC 100496 / NCIMB 8023 / NCTC 12954 / NRRL B-1118 / 37Y</strain>
    </source>
</reference>
<evidence type="ECO:0000255" key="1">
    <source>
        <dbReference type="HAMAP-Rule" id="MF_00023"/>
    </source>
</evidence>
<evidence type="ECO:0000256" key="2">
    <source>
        <dbReference type="SAM" id="MobiDB-lite"/>
    </source>
</evidence>
<gene>
    <name evidence="1" type="primary">smpB</name>
    <name type="ordered locus">LEUM_1725</name>
</gene>
<protein>
    <recommendedName>
        <fullName evidence="1">SsrA-binding protein</fullName>
    </recommendedName>
    <alternativeName>
        <fullName evidence="1">Small protein B</fullName>
    </alternativeName>
</protein>
<feature type="chain" id="PRO_1000002079" description="SsrA-binding protein">
    <location>
        <begin position="1"/>
        <end position="154"/>
    </location>
</feature>
<feature type="region of interest" description="Disordered" evidence="2">
    <location>
        <begin position="134"/>
        <end position="154"/>
    </location>
</feature>
<comment type="function">
    <text evidence="1">Required for rescue of stalled ribosomes mediated by trans-translation. Binds to transfer-messenger RNA (tmRNA), required for stable association of tmRNA with ribosomes. tmRNA and SmpB together mimic tRNA shape, replacing the anticodon stem-loop with SmpB. tmRNA is encoded by the ssrA gene; the 2 termini fold to resemble tRNA(Ala) and it encodes a 'tag peptide', a short internal open reading frame. During trans-translation Ala-aminoacylated tmRNA acts like a tRNA, entering the A-site of stalled ribosomes, displacing the stalled mRNA. The ribosome then switches to translate the ORF on the tmRNA; the nascent peptide is terminated with the 'tag peptide' encoded by the tmRNA and targeted for degradation. The ribosome is freed to recommence translation, which seems to be the essential function of trans-translation.</text>
</comment>
<comment type="subcellular location">
    <subcellularLocation>
        <location evidence="1">Cytoplasm</location>
    </subcellularLocation>
    <text evidence="1">The tmRNA-SmpB complex associates with stalled 70S ribosomes.</text>
</comment>
<comment type="similarity">
    <text evidence="1">Belongs to the SmpB family.</text>
</comment>
<keyword id="KW-0963">Cytoplasm</keyword>
<keyword id="KW-1185">Reference proteome</keyword>
<keyword id="KW-0694">RNA-binding</keyword>
<proteinExistence type="inferred from homology"/>
<accession>Q03VG0</accession>
<dbReference type="EMBL" id="CP000414">
    <property type="protein sequence ID" value="ABJ62812.1"/>
    <property type="molecule type" value="Genomic_DNA"/>
</dbReference>
<dbReference type="RefSeq" id="WP_011680332.1">
    <property type="nucleotide sequence ID" value="NC_008531.1"/>
</dbReference>
<dbReference type="SMR" id="Q03VG0"/>
<dbReference type="EnsemblBacteria" id="ABJ62812">
    <property type="protein sequence ID" value="ABJ62812"/>
    <property type="gene ID" value="LEUM_1725"/>
</dbReference>
<dbReference type="GeneID" id="29577165"/>
<dbReference type="KEGG" id="lme:LEUM_1725"/>
<dbReference type="eggNOG" id="COG0691">
    <property type="taxonomic scope" value="Bacteria"/>
</dbReference>
<dbReference type="HOGENOM" id="CLU_108953_0_0_9"/>
<dbReference type="Proteomes" id="UP000000362">
    <property type="component" value="Chromosome"/>
</dbReference>
<dbReference type="GO" id="GO:0005829">
    <property type="term" value="C:cytosol"/>
    <property type="evidence" value="ECO:0007669"/>
    <property type="project" value="TreeGrafter"/>
</dbReference>
<dbReference type="GO" id="GO:0003723">
    <property type="term" value="F:RNA binding"/>
    <property type="evidence" value="ECO:0007669"/>
    <property type="project" value="UniProtKB-UniRule"/>
</dbReference>
<dbReference type="GO" id="GO:0070929">
    <property type="term" value="P:trans-translation"/>
    <property type="evidence" value="ECO:0007669"/>
    <property type="project" value="UniProtKB-UniRule"/>
</dbReference>
<dbReference type="CDD" id="cd09294">
    <property type="entry name" value="SmpB"/>
    <property type="match status" value="1"/>
</dbReference>
<dbReference type="Gene3D" id="2.40.280.10">
    <property type="match status" value="1"/>
</dbReference>
<dbReference type="HAMAP" id="MF_00023">
    <property type="entry name" value="SmpB"/>
    <property type="match status" value="1"/>
</dbReference>
<dbReference type="InterPro" id="IPR023620">
    <property type="entry name" value="SmpB"/>
</dbReference>
<dbReference type="InterPro" id="IPR000037">
    <property type="entry name" value="SsrA-bd_prot"/>
</dbReference>
<dbReference type="InterPro" id="IPR020081">
    <property type="entry name" value="SsrA-bd_prot_CS"/>
</dbReference>
<dbReference type="NCBIfam" id="NF003843">
    <property type="entry name" value="PRK05422.1"/>
    <property type="match status" value="1"/>
</dbReference>
<dbReference type="NCBIfam" id="TIGR00086">
    <property type="entry name" value="smpB"/>
    <property type="match status" value="1"/>
</dbReference>
<dbReference type="PANTHER" id="PTHR30308:SF2">
    <property type="entry name" value="SSRA-BINDING PROTEIN"/>
    <property type="match status" value="1"/>
</dbReference>
<dbReference type="PANTHER" id="PTHR30308">
    <property type="entry name" value="TMRNA-BINDING COMPONENT OF TRANS-TRANSLATION TAGGING COMPLEX"/>
    <property type="match status" value="1"/>
</dbReference>
<dbReference type="Pfam" id="PF01668">
    <property type="entry name" value="SmpB"/>
    <property type="match status" value="1"/>
</dbReference>
<dbReference type="SUPFAM" id="SSF74982">
    <property type="entry name" value="Small protein B (SmpB)"/>
    <property type="match status" value="1"/>
</dbReference>
<dbReference type="PROSITE" id="PS01317">
    <property type="entry name" value="SSRP"/>
    <property type="match status" value="1"/>
</dbReference>